<evidence type="ECO:0000250" key="1"/>
<evidence type="ECO:0000255" key="2">
    <source>
        <dbReference type="PROSITE-ProRule" id="PRU01082"/>
    </source>
</evidence>
<evidence type="ECO:0000256" key="3">
    <source>
        <dbReference type="SAM" id="MobiDB-lite"/>
    </source>
</evidence>
<evidence type="ECO:0000305" key="4"/>
<organism>
    <name type="scientific">Arabidopsis thaliana</name>
    <name type="common">Mouse-ear cress</name>
    <dbReference type="NCBI Taxonomy" id="3702"/>
    <lineage>
        <taxon>Eukaryota</taxon>
        <taxon>Viridiplantae</taxon>
        <taxon>Streptophyta</taxon>
        <taxon>Embryophyta</taxon>
        <taxon>Tracheophyta</taxon>
        <taxon>Spermatophyta</taxon>
        <taxon>Magnoliopsida</taxon>
        <taxon>eudicotyledons</taxon>
        <taxon>Gunneridae</taxon>
        <taxon>Pentapetalae</taxon>
        <taxon>rosids</taxon>
        <taxon>malvids</taxon>
        <taxon>Brassicales</taxon>
        <taxon>Brassicaceae</taxon>
        <taxon>Camelineae</taxon>
        <taxon>Arabidopsis</taxon>
    </lineage>
</organism>
<sequence>MADHLILSLQAPPFLIFPCSLHRSWRFPGGIRYSVPEFRLSSQLQLANSISPSKSSASSSSPPENSAPEKFDLVSSTQLKDGSHVFRFGDASEIEKYLEAEEKARCVEVETQNAKIAEEASEVSRKQKKLVSSIIETSTEKEETAAPSDLSNVIKIKDRKRVRSPTKKKKETVNVSRSEDKIDAKSASVSNLSSIVSVAEAIPISSTEEEAVVEKEITAKSYNVEPLSSEAMKKVSVNKIGDCETNGYQENRMEVQARPSLSTQQEITPVSTIEIDDNLDVTEKPIEAEENLVAEPTATDDLSPDELLSTSEATHRSVDEIAQKPVIDTSEENLLNTFEAEENPVVEPTATAAVSSDELISTSEATRHSVDEIAQKPIIDTSEKNPMETFVEPEAVHSSVDESTEKLVVVTSDVENDGENVASTTEDEITVRDTITDSGSISNNDDTKVEDLQLPVPETASLEPIKAASGREELVSKAFYLDSGFASLQSPFKALAGREDAYFISHHNWIGIADGVSQWSFEGINKGMYAQELMSNCEKIISNETAKISDPVQVLHRSVNETKSSGSSTALIAHLDNNELHIANIGDSGFMVIRDGTVLQNSSPMFHHFCFPLHITQGCDVLKLAEVYHVNLEEGDVVIAATDGLFDNLYEKEIVSIVCGSLKQSLEPQKIAELVAAKAQEVGRSKTERTPFADAAKEEGYNGHKGGKLDAVTVIISFVKIVST</sequence>
<feature type="chain" id="PRO_0000367984" description="Probable protein phosphatase 2C 62">
    <location>
        <begin position="1"/>
        <end position="724"/>
    </location>
</feature>
<feature type="domain" description="PPM-type phosphatase" evidence="2">
    <location>
        <begin position="482"/>
        <end position="719"/>
    </location>
</feature>
<feature type="region of interest" description="Disordered" evidence="3">
    <location>
        <begin position="357"/>
        <end position="385"/>
    </location>
</feature>
<feature type="compositionally biased region" description="Basic and acidic residues" evidence="3">
    <location>
        <begin position="365"/>
        <end position="374"/>
    </location>
</feature>
<feature type="binding site" evidence="1">
    <location>
        <position position="514"/>
    </location>
    <ligand>
        <name>Mn(2+)</name>
        <dbReference type="ChEBI" id="CHEBI:29035"/>
        <label>1</label>
    </ligand>
</feature>
<feature type="binding site" evidence="1">
    <location>
        <position position="514"/>
    </location>
    <ligand>
        <name>Mn(2+)</name>
        <dbReference type="ChEBI" id="CHEBI:29035"/>
        <label>2</label>
    </ligand>
</feature>
<feature type="binding site" evidence="1">
    <location>
        <position position="515"/>
    </location>
    <ligand>
        <name>Mn(2+)</name>
        <dbReference type="ChEBI" id="CHEBI:29035"/>
        <label>1</label>
    </ligand>
</feature>
<feature type="binding site" evidence="1">
    <location>
        <position position="643"/>
    </location>
    <ligand>
        <name>Mn(2+)</name>
        <dbReference type="ChEBI" id="CHEBI:29035"/>
        <label>2</label>
    </ligand>
</feature>
<feature type="binding site" evidence="1">
    <location>
        <position position="710"/>
    </location>
    <ligand>
        <name>Mn(2+)</name>
        <dbReference type="ChEBI" id="CHEBI:29035"/>
        <label>2</label>
    </ligand>
</feature>
<name>P2C62_ARATH</name>
<comment type="catalytic activity">
    <reaction>
        <text>O-phospho-L-seryl-[protein] + H2O = L-seryl-[protein] + phosphate</text>
        <dbReference type="Rhea" id="RHEA:20629"/>
        <dbReference type="Rhea" id="RHEA-COMP:9863"/>
        <dbReference type="Rhea" id="RHEA-COMP:11604"/>
        <dbReference type="ChEBI" id="CHEBI:15377"/>
        <dbReference type="ChEBI" id="CHEBI:29999"/>
        <dbReference type="ChEBI" id="CHEBI:43474"/>
        <dbReference type="ChEBI" id="CHEBI:83421"/>
        <dbReference type="EC" id="3.1.3.16"/>
    </reaction>
</comment>
<comment type="catalytic activity">
    <reaction>
        <text>O-phospho-L-threonyl-[protein] + H2O = L-threonyl-[protein] + phosphate</text>
        <dbReference type="Rhea" id="RHEA:47004"/>
        <dbReference type="Rhea" id="RHEA-COMP:11060"/>
        <dbReference type="Rhea" id="RHEA-COMP:11605"/>
        <dbReference type="ChEBI" id="CHEBI:15377"/>
        <dbReference type="ChEBI" id="CHEBI:30013"/>
        <dbReference type="ChEBI" id="CHEBI:43474"/>
        <dbReference type="ChEBI" id="CHEBI:61977"/>
        <dbReference type="EC" id="3.1.3.16"/>
    </reaction>
</comment>
<comment type="cofactor">
    <cofactor evidence="1">
        <name>Mg(2+)</name>
        <dbReference type="ChEBI" id="CHEBI:18420"/>
    </cofactor>
    <cofactor evidence="1">
        <name>Mn(2+)</name>
        <dbReference type="ChEBI" id="CHEBI:29035"/>
    </cofactor>
    <text evidence="1">Binds 2 magnesium or manganese ions per subunit.</text>
</comment>
<comment type="similarity">
    <text evidence="4">Belongs to the PP2C family.</text>
</comment>
<comment type="sequence caution" evidence="4">
    <conflict type="erroneous gene model prediction">
        <sequence resource="EMBL-CDS" id="CAB38808"/>
    </conflict>
</comment>
<comment type="sequence caution" evidence="4">
    <conflict type="erroneous gene model prediction">
        <sequence resource="EMBL-CDS" id="CAB80067"/>
    </conflict>
</comment>
<protein>
    <recommendedName>
        <fullName>Probable protein phosphatase 2C 62</fullName>
        <shortName>AtPP2C62</shortName>
        <ecNumber>3.1.3.16</ecNumber>
    </recommendedName>
</protein>
<dbReference type="EC" id="3.1.3.16"/>
<dbReference type="EMBL" id="AL035678">
    <property type="protein sequence ID" value="CAB38808.1"/>
    <property type="status" value="ALT_SEQ"/>
    <property type="molecule type" value="Genomic_DNA"/>
</dbReference>
<dbReference type="EMBL" id="AL161583">
    <property type="protein sequence ID" value="CAB80067.1"/>
    <property type="status" value="ALT_SEQ"/>
    <property type="molecule type" value="Genomic_DNA"/>
</dbReference>
<dbReference type="EMBL" id="CP002687">
    <property type="protein sequence ID" value="AEE86236.1"/>
    <property type="molecule type" value="Genomic_DNA"/>
</dbReference>
<dbReference type="EMBL" id="AY035047">
    <property type="protein sequence ID" value="AAK59552.1"/>
    <property type="molecule type" value="mRNA"/>
</dbReference>
<dbReference type="EMBL" id="AY051052">
    <property type="protein sequence ID" value="AAK93729.1"/>
    <property type="molecule type" value="mRNA"/>
</dbReference>
<dbReference type="PIR" id="T06001">
    <property type="entry name" value="T06001"/>
</dbReference>
<dbReference type="RefSeq" id="NP_567923.1">
    <property type="nucleotide sequence ID" value="NM_119504.4"/>
</dbReference>
<dbReference type="SMR" id="Q93V88"/>
<dbReference type="BioGRID" id="14772">
    <property type="interactions" value="1"/>
</dbReference>
<dbReference type="FunCoup" id="Q93V88">
    <property type="interactions" value="977"/>
</dbReference>
<dbReference type="STRING" id="3702.Q93V88"/>
<dbReference type="iPTMnet" id="Q93V88"/>
<dbReference type="PaxDb" id="3702-AT4G33500.1"/>
<dbReference type="ProteomicsDB" id="248726"/>
<dbReference type="EnsemblPlants" id="AT4G33500.1">
    <property type="protein sequence ID" value="AT4G33500.1"/>
    <property type="gene ID" value="AT4G33500"/>
</dbReference>
<dbReference type="GeneID" id="829488"/>
<dbReference type="Gramene" id="AT4G33500.1">
    <property type="protein sequence ID" value="AT4G33500.1"/>
    <property type="gene ID" value="AT4G33500"/>
</dbReference>
<dbReference type="KEGG" id="ath:AT4G33500"/>
<dbReference type="Araport" id="AT4G33500"/>
<dbReference type="TAIR" id="AT4G33500">
    <property type="gene designation" value="PP2C62"/>
</dbReference>
<dbReference type="eggNOG" id="KOG1379">
    <property type="taxonomic scope" value="Eukaryota"/>
</dbReference>
<dbReference type="HOGENOM" id="CLU_010300_0_0_1"/>
<dbReference type="InParanoid" id="Q93V88"/>
<dbReference type="OMA" id="ISHHNWI"/>
<dbReference type="PhylomeDB" id="Q93V88"/>
<dbReference type="PRO" id="PR:Q93V88"/>
<dbReference type="Proteomes" id="UP000006548">
    <property type="component" value="Chromosome 4"/>
</dbReference>
<dbReference type="ExpressionAtlas" id="Q93V88">
    <property type="expression patterns" value="baseline and differential"/>
</dbReference>
<dbReference type="GO" id="GO:0009507">
    <property type="term" value="C:chloroplast"/>
    <property type="evidence" value="ECO:0000314"/>
    <property type="project" value="TAIR"/>
</dbReference>
<dbReference type="GO" id="GO:0046872">
    <property type="term" value="F:metal ion binding"/>
    <property type="evidence" value="ECO:0007669"/>
    <property type="project" value="UniProtKB-KW"/>
</dbReference>
<dbReference type="GO" id="GO:0004722">
    <property type="term" value="F:protein serine/threonine phosphatase activity"/>
    <property type="evidence" value="ECO:0007669"/>
    <property type="project" value="UniProtKB-EC"/>
</dbReference>
<dbReference type="Gene3D" id="3.60.40.10">
    <property type="entry name" value="PPM-type phosphatase domain"/>
    <property type="match status" value="2"/>
</dbReference>
<dbReference type="InterPro" id="IPR036457">
    <property type="entry name" value="PPM-type-like_dom_sf"/>
</dbReference>
<dbReference type="InterPro" id="IPR001932">
    <property type="entry name" value="PPM-type_phosphatase-like_dom"/>
</dbReference>
<dbReference type="InterPro" id="IPR039123">
    <property type="entry name" value="PPTC7"/>
</dbReference>
<dbReference type="PANTHER" id="PTHR12320">
    <property type="entry name" value="PROTEIN PHOSPHATASE 2C"/>
    <property type="match status" value="1"/>
</dbReference>
<dbReference type="PANTHER" id="PTHR12320:SF1">
    <property type="entry name" value="PROTEIN PHOSPHATASE PTC7 HOMOLOG"/>
    <property type="match status" value="1"/>
</dbReference>
<dbReference type="Pfam" id="PF13672">
    <property type="entry name" value="PP2C_2"/>
    <property type="match status" value="1"/>
</dbReference>
<dbReference type="SMART" id="SM00331">
    <property type="entry name" value="PP2C_SIG"/>
    <property type="match status" value="1"/>
</dbReference>
<dbReference type="SMART" id="SM00332">
    <property type="entry name" value="PP2Cc"/>
    <property type="match status" value="1"/>
</dbReference>
<dbReference type="SUPFAM" id="SSF81606">
    <property type="entry name" value="PP2C-like"/>
    <property type="match status" value="1"/>
</dbReference>
<dbReference type="PROSITE" id="PS51746">
    <property type="entry name" value="PPM_2"/>
    <property type="match status" value="1"/>
</dbReference>
<reference key="1">
    <citation type="journal article" date="1999" name="Nature">
        <title>Sequence and analysis of chromosome 4 of the plant Arabidopsis thaliana.</title>
        <authorList>
            <person name="Mayer K.F.X."/>
            <person name="Schueller C."/>
            <person name="Wambutt R."/>
            <person name="Murphy G."/>
            <person name="Volckaert G."/>
            <person name="Pohl T."/>
            <person name="Duesterhoeft A."/>
            <person name="Stiekema W."/>
            <person name="Entian K.-D."/>
            <person name="Terryn N."/>
            <person name="Harris B."/>
            <person name="Ansorge W."/>
            <person name="Brandt P."/>
            <person name="Grivell L.A."/>
            <person name="Rieger M."/>
            <person name="Weichselgartner M."/>
            <person name="de Simone V."/>
            <person name="Obermaier B."/>
            <person name="Mache R."/>
            <person name="Mueller M."/>
            <person name="Kreis M."/>
            <person name="Delseny M."/>
            <person name="Puigdomenech P."/>
            <person name="Watson M."/>
            <person name="Schmidtheini T."/>
            <person name="Reichert B."/>
            <person name="Portetelle D."/>
            <person name="Perez-Alonso M."/>
            <person name="Boutry M."/>
            <person name="Bancroft I."/>
            <person name="Vos P."/>
            <person name="Hoheisel J."/>
            <person name="Zimmermann W."/>
            <person name="Wedler H."/>
            <person name="Ridley P."/>
            <person name="Langham S.-A."/>
            <person name="McCullagh B."/>
            <person name="Bilham L."/>
            <person name="Robben J."/>
            <person name="van der Schueren J."/>
            <person name="Grymonprez B."/>
            <person name="Chuang Y.-J."/>
            <person name="Vandenbussche F."/>
            <person name="Braeken M."/>
            <person name="Weltjens I."/>
            <person name="Voet M."/>
            <person name="Bastiaens I."/>
            <person name="Aert R."/>
            <person name="Defoor E."/>
            <person name="Weitzenegger T."/>
            <person name="Bothe G."/>
            <person name="Ramsperger U."/>
            <person name="Hilbert H."/>
            <person name="Braun M."/>
            <person name="Holzer E."/>
            <person name="Brandt A."/>
            <person name="Peters S."/>
            <person name="van Staveren M."/>
            <person name="Dirkse W."/>
            <person name="Mooijman P."/>
            <person name="Klein Lankhorst R."/>
            <person name="Rose M."/>
            <person name="Hauf J."/>
            <person name="Koetter P."/>
            <person name="Berneiser S."/>
            <person name="Hempel S."/>
            <person name="Feldpausch M."/>
            <person name="Lamberth S."/>
            <person name="Van den Daele H."/>
            <person name="De Keyser A."/>
            <person name="Buysshaert C."/>
            <person name="Gielen J."/>
            <person name="Villarroel R."/>
            <person name="De Clercq R."/>
            <person name="van Montagu M."/>
            <person name="Rogers J."/>
            <person name="Cronin A."/>
            <person name="Quail M.A."/>
            <person name="Bray-Allen S."/>
            <person name="Clark L."/>
            <person name="Doggett J."/>
            <person name="Hall S."/>
            <person name="Kay M."/>
            <person name="Lennard N."/>
            <person name="McLay K."/>
            <person name="Mayes R."/>
            <person name="Pettett A."/>
            <person name="Rajandream M.A."/>
            <person name="Lyne M."/>
            <person name="Benes V."/>
            <person name="Rechmann S."/>
            <person name="Borkova D."/>
            <person name="Bloecker H."/>
            <person name="Scharfe M."/>
            <person name="Grimm M."/>
            <person name="Loehnert T.-H."/>
            <person name="Dose S."/>
            <person name="de Haan M."/>
            <person name="Maarse A.C."/>
            <person name="Schaefer M."/>
            <person name="Mueller-Auer S."/>
            <person name="Gabel C."/>
            <person name="Fuchs M."/>
            <person name="Fartmann B."/>
            <person name="Granderath K."/>
            <person name="Dauner D."/>
            <person name="Herzl A."/>
            <person name="Neumann S."/>
            <person name="Argiriou A."/>
            <person name="Vitale D."/>
            <person name="Liguori R."/>
            <person name="Piravandi E."/>
            <person name="Massenet O."/>
            <person name="Quigley F."/>
            <person name="Clabauld G."/>
            <person name="Muendlein A."/>
            <person name="Felber R."/>
            <person name="Schnabl S."/>
            <person name="Hiller R."/>
            <person name="Schmidt W."/>
            <person name="Lecharny A."/>
            <person name="Aubourg S."/>
            <person name="Chefdor F."/>
            <person name="Cooke R."/>
            <person name="Berger C."/>
            <person name="Monfort A."/>
            <person name="Casacuberta E."/>
            <person name="Gibbons T."/>
            <person name="Weber N."/>
            <person name="Vandenbol M."/>
            <person name="Bargues M."/>
            <person name="Terol J."/>
            <person name="Torres A."/>
            <person name="Perez-Perez A."/>
            <person name="Purnelle B."/>
            <person name="Bent E."/>
            <person name="Johnson S."/>
            <person name="Tacon D."/>
            <person name="Jesse T."/>
            <person name="Heijnen L."/>
            <person name="Schwarz S."/>
            <person name="Scholler P."/>
            <person name="Heber S."/>
            <person name="Francs P."/>
            <person name="Bielke C."/>
            <person name="Frishman D."/>
            <person name="Haase D."/>
            <person name="Lemcke K."/>
            <person name="Mewes H.-W."/>
            <person name="Stocker S."/>
            <person name="Zaccaria P."/>
            <person name="Bevan M."/>
            <person name="Wilson R.K."/>
            <person name="de la Bastide M."/>
            <person name="Habermann K."/>
            <person name="Parnell L."/>
            <person name="Dedhia N."/>
            <person name="Gnoj L."/>
            <person name="Schutz K."/>
            <person name="Huang E."/>
            <person name="Spiegel L."/>
            <person name="Sekhon M."/>
            <person name="Murray J."/>
            <person name="Sheet P."/>
            <person name="Cordes M."/>
            <person name="Abu-Threideh J."/>
            <person name="Stoneking T."/>
            <person name="Kalicki J."/>
            <person name="Graves T."/>
            <person name="Harmon G."/>
            <person name="Edwards J."/>
            <person name="Latreille P."/>
            <person name="Courtney L."/>
            <person name="Cloud J."/>
            <person name="Abbott A."/>
            <person name="Scott K."/>
            <person name="Johnson D."/>
            <person name="Minx P."/>
            <person name="Bentley D."/>
            <person name="Fulton B."/>
            <person name="Miller N."/>
            <person name="Greco T."/>
            <person name="Kemp K."/>
            <person name="Kramer J."/>
            <person name="Fulton L."/>
            <person name="Mardis E."/>
            <person name="Dante M."/>
            <person name="Pepin K."/>
            <person name="Hillier L.W."/>
            <person name="Nelson J."/>
            <person name="Spieth J."/>
            <person name="Ryan E."/>
            <person name="Andrews S."/>
            <person name="Geisel C."/>
            <person name="Layman D."/>
            <person name="Du H."/>
            <person name="Ali J."/>
            <person name="Berghoff A."/>
            <person name="Jones K."/>
            <person name="Drone K."/>
            <person name="Cotton M."/>
            <person name="Joshu C."/>
            <person name="Antonoiu B."/>
            <person name="Zidanic M."/>
            <person name="Strong C."/>
            <person name="Sun H."/>
            <person name="Lamar B."/>
            <person name="Yordan C."/>
            <person name="Ma P."/>
            <person name="Zhong J."/>
            <person name="Preston R."/>
            <person name="Vil D."/>
            <person name="Shekher M."/>
            <person name="Matero A."/>
            <person name="Shah R."/>
            <person name="Swaby I.K."/>
            <person name="O'Shaughnessy A."/>
            <person name="Rodriguez M."/>
            <person name="Hoffman J."/>
            <person name="Till S."/>
            <person name="Granat S."/>
            <person name="Shohdy N."/>
            <person name="Hasegawa A."/>
            <person name="Hameed A."/>
            <person name="Lodhi M."/>
            <person name="Johnson A."/>
            <person name="Chen E."/>
            <person name="Marra M.A."/>
            <person name="Martienssen R."/>
            <person name="McCombie W.R."/>
        </authorList>
    </citation>
    <scope>NUCLEOTIDE SEQUENCE [LARGE SCALE GENOMIC DNA]</scope>
    <source>
        <strain>cv. Columbia</strain>
    </source>
</reference>
<reference key="2">
    <citation type="journal article" date="2017" name="Plant J.">
        <title>Araport11: a complete reannotation of the Arabidopsis thaliana reference genome.</title>
        <authorList>
            <person name="Cheng C.Y."/>
            <person name="Krishnakumar V."/>
            <person name="Chan A.P."/>
            <person name="Thibaud-Nissen F."/>
            <person name="Schobel S."/>
            <person name="Town C.D."/>
        </authorList>
    </citation>
    <scope>GENOME REANNOTATION</scope>
    <source>
        <strain>cv. Columbia</strain>
    </source>
</reference>
<reference key="3">
    <citation type="journal article" date="2003" name="Science">
        <title>Empirical analysis of transcriptional activity in the Arabidopsis genome.</title>
        <authorList>
            <person name="Yamada K."/>
            <person name="Lim J."/>
            <person name="Dale J.M."/>
            <person name="Chen H."/>
            <person name="Shinn P."/>
            <person name="Palm C.J."/>
            <person name="Southwick A.M."/>
            <person name="Wu H.C."/>
            <person name="Kim C.J."/>
            <person name="Nguyen M."/>
            <person name="Pham P.K."/>
            <person name="Cheuk R.F."/>
            <person name="Karlin-Newmann G."/>
            <person name="Liu S.X."/>
            <person name="Lam B."/>
            <person name="Sakano H."/>
            <person name="Wu T."/>
            <person name="Yu G."/>
            <person name="Miranda M."/>
            <person name="Quach H.L."/>
            <person name="Tripp M."/>
            <person name="Chang C.H."/>
            <person name="Lee J.M."/>
            <person name="Toriumi M.J."/>
            <person name="Chan M.M."/>
            <person name="Tang C.C."/>
            <person name="Onodera C.S."/>
            <person name="Deng J.M."/>
            <person name="Akiyama K."/>
            <person name="Ansari Y."/>
            <person name="Arakawa T."/>
            <person name="Banh J."/>
            <person name="Banno F."/>
            <person name="Bowser L."/>
            <person name="Brooks S.Y."/>
            <person name="Carninci P."/>
            <person name="Chao Q."/>
            <person name="Choy N."/>
            <person name="Enju A."/>
            <person name="Goldsmith A.D."/>
            <person name="Gurjal M."/>
            <person name="Hansen N.F."/>
            <person name="Hayashizaki Y."/>
            <person name="Johnson-Hopson C."/>
            <person name="Hsuan V.W."/>
            <person name="Iida K."/>
            <person name="Karnes M."/>
            <person name="Khan S."/>
            <person name="Koesema E."/>
            <person name="Ishida J."/>
            <person name="Jiang P.X."/>
            <person name="Jones T."/>
            <person name="Kawai J."/>
            <person name="Kamiya A."/>
            <person name="Meyers C."/>
            <person name="Nakajima M."/>
            <person name="Narusaka M."/>
            <person name="Seki M."/>
            <person name="Sakurai T."/>
            <person name="Satou M."/>
            <person name="Tamse R."/>
            <person name="Vaysberg M."/>
            <person name="Wallender E.K."/>
            <person name="Wong C."/>
            <person name="Yamamura Y."/>
            <person name="Yuan S."/>
            <person name="Shinozaki K."/>
            <person name="Davis R.W."/>
            <person name="Theologis A."/>
            <person name="Ecker J.R."/>
        </authorList>
    </citation>
    <scope>NUCLEOTIDE SEQUENCE [LARGE SCALE MRNA]</scope>
    <source>
        <strain>cv. Columbia</strain>
    </source>
</reference>
<reference key="4">
    <citation type="journal article" date="2008" name="BMC Genomics">
        <title>Genome-wide and expression analysis of protein phosphatase 2C in rice and Arabidopsis.</title>
        <authorList>
            <person name="Xue T."/>
            <person name="Wang D."/>
            <person name="Zhang S."/>
            <person name="Ehlting J."/>
            <person name="Ni F."/>
            <person name="Jacab S."/>
            <person name="Zheng C."/>
            <person name="Zhong Y."/>
        </authorList>
    </citation>
    <scope>GENE FAMILY</scope>
    <scope>NOMENCLATURE</scope>
</reference>
<proteinExistence type="evidence at transcript level"/>
<gene>
    <name type="ordered locus">At4g33500</name>
    <name type="ORF">F17M5.260</name>
</gene>
<accession>Q93V88</accession>
<accession>Q9SZC7</accession>
<keyword id="KW-0378">Hydrolase</keyword>
<keyword id="KW-0460">Magnesium</keyword>
<keyword id="KW-0464">Manganese</keyword>
<keyword id="KW-0479">Metal-binding</keyword>
<keyword id="KW-0904">Protein phosphatase</keyword>
<keyword id="KW-1185">Reference proteome</keyword>